<gene>
    <name type="ORF">CG8202</name>
</gene>
<name>VP35L_DROME</name>
<dbReference type="EMBL" id="AE014297">
    <property type="protein sequence ID" value="AAF54281.3"/>
    <property type="molecule type" value="Genomic_DNA"/>
</dbReference>
<dbReference type="EMBL" id="AY052143">
    <property type="protein sequence ID" value="AAK93567.2"/>
    <property type="status" value="ALT_INIT"/>
    <property type="molecule type" value="mRNA"/>
</dbReference>
<dbReference type="RefSeq" id="NP_649826.3">
    <property type="nucleotide sequence ID" value="NM_141569.4"/>
</dbReference>
<dbReference type="SMR" id="Q9VHM2"/>
<dbReference type="FunCoup" id="Q9VHM2">
    <property type="interactions" value="2237"/>
</dbReference>
<dbReference type="STRING" id="7227.FBpp0081397"/>
<dbReference type="PaxDb" id="7227-FBpp0081397"/>
<dbReference type="DNASU" id="41043"/>
<dbReference type="EnsemblMetazoa" id="FBtr0081914">
    <property type="protein sequence ID" value="FBpp0081397"/>
    <property type="gene ID" value="FBgn0037622"/>
</dbReference>
<dbReference type="GeneID" id="41043"/>
<dbReference type="KEGG" id="dme:Dmel_CG8202"/>
<dbReference type="UCSC" id="CG8202-RA">
    <property type="organism name" value="d. melanogaster"/>
</dbReference>
<dbReference type="AGR" id="FB:FBgn0037622"/>
<dbReference type="FlyBase" id="FBgn0037622">
    <property type="gene designation" value="CG8202"/>
</dbReference>
<dbReference type="VEuPathDB" id="VectorBase:FBgn0037622"/>
<dbReference type="eggNOG" id="KOG3682">
    <property type="taxonomic scope" value="Eukaryota"/>
</dbReference>
<dbReference type="GeneTree" id="ENSGT00390000011343"/>
<dbReference type="HOGENOM" id="CLU_012270_0_0_1"/>
<dbReference type="InParanoid" id="Q9VHM2"/>
<dbReference type="OMA" id="RVEVCKN"/>
<dbReference type="OrthoDB" id="1734063at2759"/>
<dbReference type="PhylomeDB" id="Q9VHM2"/>
<dbReference type="Reactome" id="R-DME-6798695">
    <property type="pathway name" value="Neutrophil degranulation"/>
</dbReference>
<dbReference type="BioGRID-ORCS" id="41043">
    <property type="hits" value="0 hits in 1 CRISPR screen"/>
</dbReference>
<dbReference type="GenomeRNAi" id="41043"/>
<dbReference type="PRO" id="PR:Q9VHM2"/>
<dbReference type="Proteomes" id="UP000000803">
    <property type="component" value="Chromosome 3R"/>
</dbReference>
<dbReference type="Bgee" id="FBgn0037622">
    <property type="expression patterns" value="Expressed in embryonic/larval hemocyte (Drosophila) and 45 other cell types or tissues"/>
</dbReference>
<dbReference type="ExpressionAtlas" id="Q9VHM2">
    <property type="expression patterns" value="baseline and differential"/>
</dbReference>
<dbReference type="GO" id="GO:0005768">
    <property type="term" value="C:endosome"/>
    <property type="evidence" value="ECO:0000318"/>
    <property type="project" value="GO_Central"/>
</dbReference>
<dbReference type="GO" id="GO:0032456">
    <property type="term" value="P:endocytic recycling"/>
    <property type="evidence" value="ECO:0000318"/>
    <property type="project" value="GO_Central"/>
</dbReference>
<dbReference type="GO" id="GO:0015031">
    <property type="term" value="P:protein transport"/>
    <property type="evidence" value="ECO:0007669"/>
    <property type="project" value="UniProtKB-KW"/>
</dbReference>
<dbReference type="InterPro" id="IPR029705">
    <property type="entry name" value="VPS35L"/>
</dbReference>
<dbReference type="PANTHER" id="PTHR13673">
    <property type="entry name" value="ESOPHAGEAL CANCER ASSOCIATED PROTEIN"/>
    <property type="match status" value="1"/>
</dbReference>
<dbReference type="PANTHER" id="PTHR13673:SF0">
    <property type="entry name" value="VPS35 ENDOSOMAL PROTEIN-SORTING FACTOR-LIKE"/>
    <property type="match status" value="1"/>
</dbReference>
<evidence type="ECO:0000250" key="1">
    <source>
        <dbReference type="UniProtKB" id="Q7Z3J2"/>
    </source>
</evidence>
<evidence type="ECO:0000305" key="2"/>
<feature type="chain" id="PRO_0000311357" description="VPS35 endosomal protein sorting factor-like">
    <location>
        <begin position="1"/>
        <end position="942"/>
    </location>
</feature>
<comment type="function">
    <text evidence="1">Acts as a component of the retriever complex. The retriever complex is a heterotrimeric complex related to retromer cargo-selective complex (CSC) and essential for retromer-independent retrieval and recycling of numerous cargos.</text>
</comment>
<comment type="subunit">
    <text evidence="1">Component of the heterotrimeric retriever complex.</text>
</comment>
<comment type="subcellular location">
    <subcellularLocation>
        <location evidence="1">Endosome</location>
    </subcellularLocation>
</comment>
<comment type="similarity">
    <text evidence="2">Belongs to the VPS35L family.</text>
</comment>
<comment type="sequence caution" evidence="2">
    <conflict type="erroneous initiation">
        <sequence resource="EMBL-CDS" id="AAK93567"/>
    </conflict>
    <text>Extended N-terminus.</text>
</comment>
<reference key="1">
    <citation type="journal article" date="2000" name="Science">
        <title>The genome sequence of Drosophila melanogaster.</title>
        <authorList>
            <person name="Adams M.D."/>
            <person name="Celniker S.E."/>
            <person name="Holt R.A."/>
            <person name="Evans C.A."/>
            <person name="Gocayne J.D."/>
            <person name="Amanatides P.G."/>
            <person name="Scherer S.E."/>
            <person name="Li P.W."/>
            <person name="Hoskins R.A."/>
            <person name="Galle R.F."/>
            <person name="George R.A."/>
            <person name="Lewis S.E."/>
            <person name="Richards S."/>
            <person name="Ashburner M."/>
            <person name="Henderson S.N."/>
            <person name="Sutton G.G."/>
            <person name="Wortman J.R."/>
            <person name="Yandell M.D."/>
            <person name="Zhang Q."/>
            <person name="Chen L.X."/>
            <person name="Brandon R.C."/>
            <person name="Rogers Y.-H.C."/>
            <person name="Blazej R.G."/>
            <person name="Champe M."/>
            <person name="Pfeiffer B.D."/>
            <person name="Wan K.H."/>
            <person name="Doyle C."/>
            <person name="Baxter E.G."/>
            <person name="Helt G."/>
            <person name="Nelson C.R."/>
            <person name="Miklos G.L.G."/>
            <person name="Abril J.F."/>
            <person name="Agbayani A."/>
            <person name="An H.-J."/>
            <person name="Andrews-Pfannkoch C."/>
            <person name="Baldwin D."/>
            <person name="Ballew R.M."/>
            <person name="Basu A."/>
            <person name="Baxendale J."/>
            <person name="Bayraktaroglu L."/>
            <person name="Beasley E.M."/>
            <person name="Beeson K.Y."/>
            <person name="Benos P.V."/>
            <person name="Berman B.P."/>
            <person name="Bhandari D."/>
            <person name="Bolshakov S."/>
            <person name="Borkova D."/>
            <person name="Botchan M.R."/>
            <person name="Bouck J."/>
            <person name="Brokstein P."/>
            <person name="Brottier P."/>
            <person name="Burtis K.C."/>
            <person name="Busam D.A."/>
            <person name="Butler H."/>
            <person name="Cadieu E."/>
            <person name="Center A."/>
            <person name="Chandra I."/>
            <person name="Cherry J.M."/>
            <person name="Cawley S."/>
            <person name="Dahlke C."/>
            <person name="Davenport L.B."/>
            <person name="Davies P."/>
            <person name="de Pablos B."/>
            <person name="Delcher A."/>
            <person name="Deng Z."/>
            <person name="Mays A.D."/>
            <person name="Dew I."/>
            <person name="Dietz S.M."/>
            <person name="Dodson K."/>
            <person name="Doup L.E."/>
            <person name="Downes M."/>
            <person name="Dugan-Rocha S."/>
            <person name="Dunkov B.C."/>
            <person name="Dunn P."/>
            <person name="Durbin K.J."/>
            <person name="Evangelista C.C."/>
            <person name="Ferraz C."/>
            <person name="Ferriera S."/>
            <person name="Fleischmann W."/>
            <person name="Fosler C."/>
            <person name="Gabrielian A.E."/>
            <person name="Garg N.S."/>
            <person name="Gelbart W.M."/>
            <person name="Glasser K."/>
            <person name="Glodek A."/>
            <person name="Gong F."/>
            <person name="Gorrell J.H."/>
            <person name="Gu Z."/>
            <person name="Guan P."/>
            <person name="Harris M."/>
            <person name="Harris N.L."/>
            <person name="Harvey D.A."/>
            <person name="Heiman T.J."/>
            <person name="Hernandez J.R."/>
            <person name="Houck J."/>
            <person name="Hostin D."/>
            <person name="Houston K.A."/>
            <person name="Howland T.J."/>
            <person name="Wei M.-H."/>
            <person name="Ibegwam C."/>
            <person name="Jalali M."/>
            <person name="Kalush F."/>
            <person name="Karpen G.H."/>
            <person name="Ke Z."/>
            <person name="Kennison J.A."/>
            <person name="Ketchum K.A."/>
            <person name="Kimmel B.E."/>
            <person name="Kodira C.D."/>
            <person name="Kraft C.L."/>
            <person name="Kravitz S."/>
            <person name="Kulp D."/>
            <person name="Lai Z."/>
            <person name="Lasko P."/>
            <person name="Lei Y."/>
            <person name="Levitsky A.A."/>
            <person name="Li J.H."/>
            <person name="Li Z."/>
            <person name="Liang Y."/>
            <person name="Lin X."/>
            <person name="Liu X."/>
            <person name="Mattei B."/>
            <person name="McIntosh T.C."/>
            <person name="McLeod M.P."/>
            <person name="McPherson D."/>
            <person name="Merkulov G."/>
            <person name="Milshina N.V."/>
            <person name="Mobarry C."/>
            <person name="Morris J."/>
            <person name="Moshrefi A."/>
            <person name="Mount S.M."/>
            <person name="Moy M."/>
            <person name="Murphy B."/>
            <person name="Murphy L."/>
            <person name="Muzny D.M."/>
            <person name="Nelson D.L."/>
            <person name="Nelson D.R."/>
            <person name="Nelson K.A."/>
            <person name="Nixon K."/>
            <person name="Nusskern D.R."/>
            <person name="Pacleb J.M."/>
            <person name="Palazzolo M."/>
            <person name="Pittman G.S."/>
            <person name="Pan S."/>
            <person name="Pollard J."/>
            <person name="Puri V."/>
            <person name="Reese M.G."/>
            <person name="Reinert K."/>
            <person name="Remington K."/>
            <person name="Saunders R.D.C."/>
            <person name="Scheeler F."/>
            <person name="Shen H."/>
            <person name="Shue B.C."/>
            <person name="Siden-Kiamos I."/>
            <person name="Simpson M."/>
            <person name="Skupski M.P."/>
            <person name="Smith T.J."/>
            <person name="Spier E."/>
            <person name="Spradling A.C."/>
            <person name="Stapleton M."/>
            <person name="Strong R."/>
            <person name="Sun E."/>
            <person name="Svirskas R."/>
            <person name="Tector C."/>
            <person name="Turner R."/>
            <person name="Venter E."/>
            <person name="Wang A.H."/>
            <person name="Wang X."/>
            <person name="Wang Z.-Y."/>
            <person name="Wassarman D.A."/>
            <person name="Weinstock G.M."/>
            <person name="Weissenbach J."/>
            <person name="Williams S.M."/>
            <person name="Woodage T."/>
            <person name="Worley K.C."/>
            <person name="Wu D."/>
            <person name="Yang S."/>
            <person name="Yao Q.A."/>
            <person name="Ye J."/>
            <person name="Yeh R.-F."/>
            <person name="Zaveri J.S."/>
            <person name="Zhan M."/>
            <person name="Zhang G."/>
            <person name="Zhao Q."/>
            <person name="Zheng L."/>
            <person name="Zheng X.H."/>
            <person name="Zhong F.N."/>
            <person name="Zhong W."/>
            <person name="Zhou X."/>
            <person name="Zhu S.C."/>
            <person name="Zhu X."/>
            <person name="Smith H.O."/>
            <person name="Gibbs R.A."/>
            <person name="Myers E.W."/>
            <person name="Rubin G.M."/>
            <person name="Venter J.C."/>
        </authorList>
    </citation>
    <scope>NUCLEOTIDE SEQUENCE [LARGE SCALE GENOMIC DNA]</scope>
    <source>
        <strain>Berkeley</strain>
    </source>
</reference>
<reference key="2">
    <citation type="journal article" date="2002" name="Genome Biol.">
        <title>Annotation of the Drosophila melanogaster euchromatic genome: a systematic review.</title>
        <authorList>
            <person name="Misra S."/>
            <person name="Crosby M.A."/>
            <person name="Mungall C.J."/>
            <person name="Matthews B.B."/>
            <person name="Campbell K.S."/>
            <person name="Hradecky P."/>
            <person name="Huang Y."/>
            <person name="Kaminker J.S."/>
            <person name="Millburn G.H."/>
            <person name="Prochnik S.E."/>
            <person name="Smith C.D."/>
            <person name="Tupy J.L."/>
            <person name="Whitfield E.J."/>
            <person name="Bayraktaroglu L."/>
            <person name="Berman B.P."/>
            <person name="Bettencourt B.R."/>
            <person name="Celniker S.E."/>
            <person name="de Grey A.D.N.J."/>
            <person name="Drysdale R.A."/>
            <person name="Harris N.L."/>
            <person name="Richter J."/>
            <person name="Russo S."/>
            <person name="Schroeder A.J."/>
            <person name="Shu S.Q."/>
            <person name="Stapleton M."/>
            <person name="Yamada C."/>
            <person name="Ashburner M."/>
            <person name="Gelbart W.M."/>
            <person name="Rubin G.M."/>
            <person name="Lewis S.E."/>
        </authorList>
    </citation>
    <scope>GENOME REANNOTATION</scope>
    <source>
        <strain>Berkeley</strain>
    </source>
</reference>
<reference key="3">
    <citation type="journal article" date="2002" name="Genome Biol.">
        <title>A Drosophila full-length cDNA resource.</title>
        <authorList>
            <person name="Stapleton M."/>
            <person name="Carlson J.W."/>
            <person name="Brokstein P."/>
            <person name="Yu C."/>
            <person name="Champe M."/>
            <person name="George R.A."/>
            <person name="Guarin H."/>
            <person name="Kronmiller B."/>
            <person name="Pacleb J.M."/>
            <person name="Park S."/>
            <person name="Wan K.H."/>
            <person name="Rubin G.M."/>
            <person name="Celniker S.E."/>
        </authorList>
    </citation>
    <scope>NUCLEOTIDE SEQUENCE [LARGE SCALE MRNA]</scope>
    <source>
        <strain>Berkeley</strain>
        <tissue>Embryo</tissue>
    </source>
</reference>
<reference key="4">
    <citation type="submission" date="2009-08" db="EMBL/GenBank/DDBJ databases">
        <authorList>
            <person name="Carlson J.W."/>
            <person name="Booth B."/>
            <person name="Frise E."/>
            <person name="Park S."/>
            <person name="Wan K.H."/>
            <person name="Yu C."/>
            <person name="Celniker S.E."/>
        </authorList>
    </citation>
    <scope>SEQUENCE REVISION</scope>
</reference>
<sequence>MANLEWVCVPRCYEVRKNCLTGQATLEHPLKQRTVTVVDSNPLSRALEGTDPLSQFARQDDELNDPLSQMVSEFDLKSKRRERDRTEPEDNTLQWSSRRLGILNRFTTNEKLSLSTSFLVSSGSLDGGNESIKAQTVVADKTKFRLEQLDHFDDGSMRHMMDLTQQEYIQRFEQLKQELIQSWHNDQRVKALKIAIQCAKMLADTTVLQFYPSQYVLITDILDVFGKLVYERLRAKASGDPAASAATLEREREAARDTCQNWFYKIASIRELLPRFYLELSIFKCYEFLSSSREEYERILQRLTHQLRGIADPLVSSYARCYLVRMGVTLTSSKTYIRENFADLFLIYPQIFRFVARFNLHPEIVTASSYLQLYAPAFDYMLLCLVHKSELHTQDILNECKQLKNNGAILMSVLSSFNSEFIATNALEFIALINASETPGISKSQLLRSLGSCVSSCPPLQEQRVTFLKAAFETINKLTDPNEYINCVETWAVFVSQYFTIHEVNRLLGELNTRMCLGKAYEKHYSQLQNILTRIMQNYRSIELLLIQPNFLPYLDLFQKESVRVEVCKNILSFYKQNSDEYTCDAVVTNALMYLGKILNDSVNALSVDDERRQIAQLINVFIHKVHFGNDLEQQLSFYVEARGTFSNLDAVYVTLVHAACKLATRNRSKSTGFVKACIAYCFITIPSIEAVQQQMNLYLLCGQLALQHLCLGQADACFEAALQLVNELPAATVDFDGKPRSLEPFLVSYMCNILATLIVVPDSPEQGVLYFLRLLLEVVGRHKFKVDSSAPSIIYLHSLDMLYVQSLERFPYHIKGVVSNDDLYGHDPKFLQEVNNMCAQVVDAILLQLKSLGVAQQQRSQAELALELFLRIVKYADLERETIAQLAVNLWLLANKAQSQLDVKTLPQTLRSVEIIYKQIKDASPIRAQTIAKLLLRVRSS</sequence>
<keyword id="KW-0967">Endosome</keyword>
<keyword id="KW-0653">Protein transport</keyword>
<keyword id="KW-1185">Reference proteome</keyword>
<keyword id="KW-0813">Transport</keyword>
<protein>
    <recommendedName>
        <fullName evidence="2">VPS35 endosomal protein sorting factor-like</fullName>
    </recommendedName>
</protein>
<proteinExistence type="evidence at transcript level"/>
<accession>Q9VHM2</accession>
<accession>Q960B2</accession>
<organism>
    <name type="scientific">Drosophila melanogaster</name>
    <name type="common">Fruit fly</name>
    <dbReference type="NCBI Taxonomy" id="7227"/>
    <lineage>
        <taxon>Eukaryota</taxon>
        <taxon>Metazoa</taxon>
        <taxon>Ecdysozoa</taxon>
        <taxon>Arthropoda</taxon>
        <taxon>Hexapoda</taxon>
        <taxon>Insecta</taxon>
        <taxon>Pterygota</taxon>
        <taxon>Neoptera</taxon>
        <taxon>Endopterygota</taxon>
        <taxon>Diptera</taxon>
        <taxon>Brachycera</taxon>
        <taxon>Muscomorpha</taxon>
        <taxon>Ephydroidea</taxon>
        <taxon>Drosophilidae</taxon>
        <taxon>Drosophila</taxon>
        <taxon>Sophophora</taxon>
    </lineage>
</organism>